<dbReference type="EC" id="6.3.2.6"/>
<dbReference type="EMBL" id="AE007869">
    <property type="protein sequence ID" value="AAK87611.1"/>
    <property type="molecule type" value="Genomic_DNA"/>
</dbReference>
<dbReference type="PIR" id="AI2802">
    <property type="entry name" value="AI2802"/>
</dbReference>
<dbReference type="PIR" id="B97582">
    <property type="entry name" value="B97582"/>
</dbReference>
<dbReference type="RefSeq" id="NP_354826.1">
    <property type="nucleotide sequence ID" value="NC_003062.2"/>
</dbReference>
<dbReference type="RefSeq" id="WP_006314097.1">
    <property type="nucleotide sequence ID" value="NC_003062.2"/>
</dbReference>
<dbReference type="SMR" id="Q8UEB7"/>
<dbReference type="STRING" id="176299.Atu1843"/>
<dbReference type="EnsemblBacteria" id="AAK87611">
    <property type="protein sequence ID" value="AAK87611"/>
    <property type="gene ID" value="Atu1843"/>
</dbReference>
<dbReference type="GeneID" id="1133881"/>
<dbReference type="KEGG" id="atu:Atu1843"/>
<dbReference type="PATRIC" id="fig|176299.10.peg.1856"/>
<dbReference type="eggNOG" id="COG0152">
    <property type="taxonomic scope" value="Bacteria"/>
</dbReference>
<dbReference type="HOGENOM" id="CLU_061495_2_0_5"/>
<dbReference type="OrthoDB" id="9801549at2"/>
<dbReference type="PhylomeDB" id="Q8UEB7"/>
<dbReference type="BioCyc" id="AGRO:ATU1843-MONOMER"/>
<dbReference type="UniPathway" id="UPA00074">
    <property type="reaction ID" value="UER00131"/>
</dbReference>
<dbReference type="Proteomes" id="UP000000813">
    <property type="component" value="Chromosome circular"/>
</dbReference>
<dbReference type="GO" id="GO:0005829">
    <property type="term" value="C:cytosol"/>
    <property type="evidence" value="ECO:0007669"/>
    <property type="project" value="TreeGrafter"/>
</dbReference>
<dbReference type="GO" id="GO:0005524">
    <property type="term" value="F:ATP binding"/>
    <property type="evidence" value="ECO:0007669"/>
    <property type="project" value="UniProtKB-KW"/>
</dbReference>
<dbReference type="GO" id="GO:0004639">
    <property type="term" value="F:phosphoribosylaminoimidazolesuccinocarboxamide synthase activity"/>
    <property type="evidence" value="ECO:0007669"/>
    <property type="project" value="UniProtKB-UniRule"/>
</dbReference>
<dbReference type="GO" id="GO:0006189">
    <property type="term" value="P:'de novo' IMP biosynthetic process"/>
    <property type="evidence" value="ECO:0007669"/>
    <property type="project" value="UniProtKB-UniRule"/>
</dbReference>
<dbReference type="GO" id="GO:0009236">
    <property type="term" value="P:cobalamin biosynthetic process"/>
    <property type="evidence" value="ECO:0007669"/>
    <property type="project" value="InterPro"/>
</dbReference>
<dbReference type="CDD" id="cd01415">
    <property type="entry name" value="SAICAR_synt_PurC"/>
    <property type="match status" value="1"/>
</dbReference>
<dbReference type="FunFam" id="3.30.470.20:FF:000006">
    <property type="entry name" value="Phosphoribosylaminoimidazole-succinocarboxamide synthase"/>
    <property type="match status" value="1"/>
</dbReference>
<dbReference type="Gene3D" id="3.30.470.20">
    <property type="entry name" value="ATP-grasp fold, B domain"/>
    <property type="match status" value="1"/>
</dbReference>
<dbReference type="Gene3D" id="3.30.200.20">
    <property type="entry name" value="Phosphorylase Kinase, domain 1"/>
    <property type="match status" value="1"/>
</dbReference>
<dbReference type="HAMAP" id="MF_00137">
    <property type="entry name" value="SAICAR_synth"/>
    <property type="match status" value="1"/>
</dbReference>
<dbReference type="InterPro" id="IPR028923">
    <property type="entry name" value="SAICAR_synt/ADE2_N"/>
</dbReference>
<dbReference type="InterPro" id="IPR033934">
    <property type="entry name" value="SAICAR_synt_PurC"/>
</dbReference>
<dbReference type="InterPro" id="IPR001636">
    <property type="entry name" value="SAICAR_synth"/>
</dbReference>
<dbReference type="InterPro" id="IPR050089">
    <property type="entry name" value="SAICAR_synthetase"/>
</dbReference>
<dbReference type="InterPro" id="IPR018236">
    <property type="entry name" value="SAICAR_synthetase_CS"/>
</dbReference>
<dbReference type="NCBIfam" id="TIGR00081">
    <property type="entry name" value="purC"/>
    <property type="match status" value="1"/>
</dbReference>
<dbReference type="PANTHER" id="PTHR43599">
    <property type="entry name" value="MULTIFUNCTIONAL PROTEIN ADE2"/>
    <property type="match status" value="1"/>
</dbReference>
<dbReference type="PANTHER" id="PTHR43599:SF3">
    <property type="entry name" value="SI:DKEY-6E2.2"/>
    <property type="match status" value="1"/>
</dbReference>
<dbReference type="Pfam" id="PF01259">
    <property type="entry name" value="SAICAR_synt"/>
    <property type="match status" value="1"/>
</dbReference>
<dbReference type="SUPFAM" id="SSF56104">
    <property type="entry name" value="SAICAR synthase-like"/>
    <property type="match status" value="1"/>
</dbReference>
<dbReference type="PROSITE" id="PS01057">
    <property type="entry name" value="SAICAR_SYNTHETASE_1"/>
    <property type="match status" value="1"/>
</dbReference>
<proteinExistence type="inferred from homology"/>
<organism>
    <name type="scientific">Agrobacterium fabrum (strain C58 / ATCC 33970)</name>
    <name type="common">Agrobacterium tumefaciens (strain C58)</name>
    <dbReference type="NCBI Taxonomy" id="176299"/>
    <lineage>
        <taxon>Bacteria</taxon>
        <taxon>Pseudomonadati</taxon>
        <taxon>Pseudomonadota</taxon>
        <taxon>Alphaproteobacteria</taxon>
        <taxon>Hyphomicrobiales</taxon>
        <taxon>Rhizobiaceae</taxon>
        <taxon>Rhizobium/Agrobacterium group</taxon>
        <taxon>Agrobacterium</taxon>
        <taxon>Agrobacterium tumefaciens complex</taxon>
    </lineage>
</organism>
<name>PUR71_AGRFC</name>
<evidence type="ECO:0000305" key="1"/>
<accession>Q8UEB7</accession>
<sequence length="254" mass="29039">MNRRRRIYEGKAKILYEGPEPGTLIQFFKDDATAFNKKKHEVIDGKGVLNNRICEYVFTHLNKIGIPTHFIRRLNMREQLIKEVEMIPLEIVVRNVAAGSLSKRLGIEEGVVLPRSIIEFYYKSDELEDPMVSEEHITAFGWANPAELDDIMALAIRVNDFLSGLFLGVGIQLVDFKIECGRLFEGDMMRIILADEISPDSCRLWDIETQKKMDKDLFRRDLGGLVEAYSEVARRLGIINENEPIRGTGPVLVK</sequence>
<protein>
    <recommendedName>
        <fullName>Phosphoribosylaminoimidazole-succinocarboxamide synthase 1</fullName>
        <ecNumber>6.3.2.6</ecNumber>
    </recommendedName>
    <alternativeName>
        <fullName>SAICAR synthetase 1</fullName>
    </alternativeName>
</protein>
<comment type="catalytic activity">
    <reaction>
        <text>5-amino-1-(5-phospho-D-ribosyl)imidazole-4-carboxylate + L-aspartate + ATP = (2S)-2-[5-amino-1-(5-phospho-beta-D-ribosyl)imidazole-4-carboxamido]succinate + ADP + phosphate + 2 H(+)</text>
        <dbReference type="Rhea" id="RHEA:22628"/>
        <dbReference type="ChEBI" id="CHEBI:15378"/>
        <dbReference type="ChEBI" id="CHEBI:29991"/>
        <dbReference type="ChEBI" id="CHEBI:30616"/>
        <dbReference type="ChEBI" id="CHEBI:43474"/>
        <dbReference type="ChEBI" id="CHEBI:58443"/>
        <dbReference type="ChEBI" id="CHEBI:77657"/>
        <dbReference type="ChEBI" id="CHEBI:456216"/>
        <dbReference type="EC" id="6.3.2.6"/>
    </reaction>
</comment>
<comment type="pathway">
    <text>Purine metabolism; IMP biosynthesis via de novo pathway; 5-amino-1-(5-phospho-D-ribosyl)imidazole-4-carboxamide from 5-amino-1-(5-phospho-D-ribosyl)imidazole-4-carboxylate: step 1/2.</text>
</comment>
<comment type="similarity">
    <text evidence="1">Belongs to the SAICAR synthetase family.</text>
</comment>
<keyword id="KW-0067">ATP-binding</keyword>
<keyword id="KW-0436">Ligase</keyword>
<keyword id="KW-0547">Nucleotide-binding</keyword>
<keyword id="KW-0658">Purine biosynthesis</keyword>
<keyword id="KW-1185">Reference proteome</keyword>
<gene>
    <name type="primary">purC1</name>
    <name type="ordered locus">Atu1843</name>
    <name type="ORF">AGR_C_3382</name>
</gene>
<feature type="chain" id="PRO_0000100794" description="Phosphoribosylaminoimidazole-succinocarboxamide synthase 1">
    <location>
        <begin position="1"/>
        <end position="254"/>
    </location>
</feature>
<reference key="1">
    <citation type="journal article" date="2001" name="Science">
        <title>The genome of the natural genetic engineer Agrobacterium tumefaciens C58.</title>
        <authorList>
            <person name="Wood D.W."/>
            <person name="Setubal J.C."/>
            <person name="Kaul R."/>
            <person name="Monks D.E."/>
            <person name="Kitajima J.P."/>
            <person name="Okura V.K."/>
            <person name="Zhou Y."/>
            <person name="Chen L."/>
            <person name="Wood G.E."/>
            <person name="Almeida N.F. Jr."/>
            <person name="Woo L."/>
            <person name="Chen Y."/>
            <person name="Paulsen I.T."/>
            <person name="Eisen J.A."/>
            <person name="Karp P.D."/>
            <person name="Bovee D. Sr."/>
            <person name="Chapman P."/>
            <person name="Clendenning J."/>
            <person name="Deatherage G."/>
            <person name="Gillet W."/>
            <person name="Grant C."/>
            <person name="Kutyavin T."/>
            <person name="Levy R."/>
            <person name="Li M.-J."/>
            <person name="McClelland E."/>
            <person name="Palmieri A."/>
            <person name="Raymond C."/>
            <person name="Rouse G."/>
            <person name="Saenphimmachak C."/>
            <person name="Wu Z."/>
            <person name="Romero P."/>
            <person name="Gordon D."/>
            <person name="Zhang S."/>
            <person name="Yoo H."/>
            <person name="Tao Y."/>
            <person name="Biddle P."/>
            <person name="Jung M."/>
            <person name="Krespan W."/>
            <person name="Perry M."/>
            <person name="Gordon-Kamm B."/>
            <person name="Liao L."/>
            <person name="Kim S."/>
            <person name="Hendrick C."/>
            <person name="Zhao Z.-Y."/>
            <person name="Dolan M."/>
            <person name="Chumley F."/>
            <person name="Tingey S.V."/>
            <person name="Tomb J.-F."/>
            <person name="Gordon M.P."/>
            <person name="Olson M.V."/>
            <person name="Nester E.W."/>
        </authorList>
    </citation>
    <scope>NUCLEOTIDE SEQUENCE [LARGE SCALE GENOMIC DNA]</scope>
    <source>
        <strain>C58 / ATCC 33970</strain>
    </source>
</reference>
<reference key="2">
    <citation type="journal article" date="2001" name="Science">
        <title>Genome sequence of the plant pathogen and biotechnology agent Agrobacterium tumefaciens C58.</title>
        <authorList>
            <person name="Goodner B."/>
            <person name="Hinkle G."/>
            <person name="Gattung S."/>
            <person name="Miller N."/>
            <person name="Blanchard M."/>
            <person name="Qurollo B."/>
            <person name="Goldman B.S."/>
            <person name="Cao Y."/>
            <person name="Askenazi M."/>
            <person name="Halling C."/>
            <person name="Mullin L."/>
            <person name="Houmiel K."/>
            <person name="Gordon J."/>
            <person name="Vaudin M."/>
            <person name="Iartchouk O."/>
            <person name="Epp A."/>
            <person name="Liu F."/>
            <person name="Wollam C."/>
            <person name="Allinger M."/>
            <person name="Doughty D."/>
            <person name="Scott C."/>
            <person name="Lappas C."/>
            <person name="Markelz B."/>
            <person name="Flanagan C."/>
            <person name="Crowell C."/>
            <person name="Gurson J."/>
            <person name="Lomo C."/>
            <person name="Sear C."/>
            <person name="Strub G."/>
            <person name="Cielo C."/>
            <person name="Slater S."/>
        </authorList>
    </citation>
    <scope>NUCLEOTIDE SEQUENCE [LARGE SCALE GENOMIC DNA]</scope>
    <source>
        <strain>C58 / ATCC 33970</strain>
    </source>
</reference>